<reference key="1">
    <citation type="submission" date="2003-03" db="EMBL/GenBank/DDBJ databases">
        <title>African swine fever virus genomes.</title>
        <authorList>
            <person name="Kutish G.F."/>
            <person name="Rock D.L."/>
        </authorList>
    </citation>
    <scope>NUCLEOTIDE SEQUENCE [GENOMIC DNA]</scope>
</reference>
<name>VF146_ASFP4</name>
<organismHost>
    <name type="scientific">Ornithodoros</name>
    <name type="common">relapsing fever ticks</name>
    <dbReference type="NCBI Taxonomy" id="6937"/>
</organismHost>
<organismHost>
    <name type="scientific">Phacochoerus aethiopicus</name>
    <name type="common">Warthog</name>
    <dbReference type="NCBI Taxonomy" id="85517"/>
</organismHost>
<organismHost>
    <name type="scientific">Phacochoerus africanus</name>
    <name type="common">Warthog</name>
    <dbReference type="NCBI Taxonomy" id="41426"/>
</organismHost>
<organismHost>
    <name type="scientific">Potamochoerus larvatus</name>
    <name type="common">Bushpig</name>
    <dbReference type="NCBI Taxonomy" id="273792"/>
</organismHost>
<organismHost>
    <name type="scientific">Sus scrofa</name>
    <name type="common">Pig</name>
    <dbReference type="NCBI Taxonomy" id="9823"/>
</organismHost>
<protein>
    <recommendedName>
        <fullName>Uncharacterized protein E146L</fullName>
        <shortName>pE146L</shortName>
    </recommendedName>
</protein>
<keyword id="KW-1043">Host membrane</keyword>
<keyword id="KW-0472">Membrane</keyword>
<keyword id="KW-0812">Transmembrane</keyword>
<keyword id="KW-1133">Transmembrane helix</keyword>
<keyword id="KW-0946">Virion</keyword>
<accession>P0CA53</accession>
<proteinExistence type="inferred from homology"/>
<sequence>MGGTADFVLSITIVLVILIIIAFIWYNFTGWSPFKYSKGNTVTFKTPDESSIAYMRFRNCIFTFTDPKGSLHSIDVTEVLNNMAKGFRDAQNPPSSFTLGGHCQAPLNAFSFVLPGVNDRATVATADDAKKWENCDATLTGLQRII</sequence>
<organism>
    <name type="scientific">African swine fever virus (isolate Tick/South Africa/Pretoriuskop Pr4/1996)</name>
    <name type="common">ASFV</name>
    <dbReference type="NCBI Taxonomy" id="561443"/>
    <lineage>
        <taxon>Viruses</taxon>
        <taxon>Varidnaviria</taxon>
        <taxon>Bamfordvirae</taxon>
        <taxon>Nucleocytoviricota</taxon>
        <taxon>Pokkesviricetes</taxon>
        <taxon>Asfuvirales</taxon>
        <taxon>Asfarviridae</taxon>
        <taxon>Asfivirus</taxon>
        <taxon>African swine fever virus</taxon>
    </lineage>
</organism>
<gene>
    <name type="ordered locus">Pret-141</name>
</gene>
<evidence type="ECO:0000250" key="1">
    <source>
        <dbReference type="UniProtKB" id="Q65197"/>
    </source>
</evidence>
<evidence type="ECO:0000255" key="2"/>
<evidence type="ECO:0000305" key="3"/>
<feature type="chain" id="PRO_0000373527" description="Uncharacterized protein E146L">
    <location>
        <begin position="1"/>
        <end position="146"/>
    </location>
</feature>
<feature type="transmembrane region" description="Helical" evidence="2">
    <location>
        <begin position="7"/>
        <end position="27"/>
    </location>
</feature>
<comment type="subcellular location">
    <subcellularLocation>
        <location evidence="3">Host membrane</location>
        <topology evidence="3">Single-pass membrane protein</topology>
    </subcellularLocation>
    <subcellularLocation>
        <location evidence="1">Virion</location>
    </subcellularLocation>
</comment>
<comment type="induction">
    <text evidence="3">Expressed in the late phase of the viral replicative cycle.</text>
</comment>
<comment type="similarity">
    <text evidence="3">Belongs to the asfivirus E146L family.</text>
</comment>
<dbReference type="EMBL" id="AY261363">
    <property type="status" value="NOT_ANNOTATED_CDS"/>
    <property type="molecule type" value="Genomic_DNA"/>
</dbReference>
<dbReference type="SMR" id="P0CA53"/>
<dbReference type="Proteomes" id="UP000000859">
    <property type="component" value="Segment"/>
</dbReference>
<dbReference type="GO" id="GO:0033644">
    <property type="term" value="C:host cell membrane"/>
    <property type="evidence" value="ECO:0007669"/>
    <property type="project" value="UniProtKB-SubCell"/>
</dbReference>
<dbReference type="GO" id="GO:0016020">
    <property type="term" value="C:membrane"/>
    <property type="evidence" value="ECO:0007669"/>
    <property type="project" value="UniProtKB-KW"/>
</dbReference>
<dbReference type="GO" id="GO:0044423">
    <property type="term" value="C:virion component"/>
    <property type="evidence" value="ECO:0007669"/>
    <property type="project" value="UniProtKB-KW"/>
</dbReference>